<keyword id="KW-0963">Cytoplasm</keyword>
<keyword id="KW-0903">Direct protein sequencing</keyword>
<keyword id="KW-0349">Heme</keyword>
<keyword id="KW-0408">Iron</keyword>
<keyword id="KW-0479">Metal-binding</keyword>
<keyword id="KW-0514">Muscle protein</keyword>
<keyword id="KW-0560">Oxidoreductase</keyword>
<keyword id="KW-0561">Oxygen transport</keyword>
<keyword id="KW-0597">Phosphoprotein</keyword>
<keyword id="KW-1185">Reference proteome</keyword>
<keyword id="KW-0813">Transport</keyword>
<protein>
    <recommendedName>
        <fullName>Myoglobin</fullName>
    </recommendedName>
    <alternativeName>
        <fullName evidence="1">Nitrite reductase MB</fullName>
        <ecNumber evidence="1">1.7.-.-</ecNumber>
    </alternativeName>
    <alternativeName>
        <fullName evidence="1">Pseudoperoxidase MB</fullName>
        <ecNumber evidence="1">1.11.1.-</ecNumber>
    </alternativeName>
</protein>
<organism>
    <name type="scientific">Oryctolagus cuniculus</name>
    <name type="common">Rabbit</name>
    <dbReference type="NCBI Taxonomy" id="9986"/>
    <lineage>
        <taxon>Eukaryota</taxon>
        <taxon>Metazoa</taxon>
        <taxon>Chordata</taxon>
        <taxon>Craniata</taxon>
        <taxon>Vertebrata</taxon>
        <taxon>Euteleostomi</taxon>
        <taxon>Mammalia</taxon>
        <taxon>Eutheria</taxon>
        <taxon>Euarchontoglires</taxon>
        <taxon>Glires</taxon>
        <taxon>Lagomorpha</taxon>
        <taxon>Leporidae</taxon>
        <taxon>Oryctolagus</taxon>
    </lineage>
</organism>
<name>MYG_RABIT</name>
<accession>P02170</accession>
<gene>
    <name type="primary">MB</name>
</gene>
<reference key="1">
    <citation type="journal article" date="1976" name="Biochim. Biophys. Acta">
        <title>The primary structure of the myoglobin of rabbit (Oryctolagus cuniculus).</title>
        <authorList>
            <person name="Romero-Herrera A.E."/>
            <person name="Lehmann H."/>
            <person name="Castillo O."/>
        </authorList>
    </citation>
    <scope>PROTEIN SEQUENCE OF 2-154</scope>
</reference>
<dbReference type="EC" id="1.7.-.-" evidence="1"/>
<dbReference type="EC" id="1.11.1.-" evidence="1"/>
<dbReference type="PIR" id="A02492">
    <property type="entry name" value="MYRB"/>
</dbReference>
<dbReference type="RefSeq" id="XP_069908949.1">
    <property type="nucleotide sequence ID" value="XM_070052848.1"/>
</dbReference>
<dbReference type="RefSeq" id="XP_069908950.1">
    <property type="nucleotide sequence ID" value="XM_070052849.1"/>
</dbReference>
<dbReference type="RefSeq" id="XP_069908951.1">
    <property type="nucleotide sequence ID" value="XM_070052850.1"/>
</dbReference>
<dbReference type="SMR" id="P02170"/>
<dbReference type="FunCoup" id="P02170">
    <property type="interactions" value="25"/>
</dbReference>
<dbReference type="STRING" id="9986.ENSOCUP00000023254"/>
<dbReference type="PaxDb" id="9986-ENSOCUP00000023254"/>
<dbReference type="GeneID" id="100351487"/>
<dbReference type="eggNOG" id="KOG3378">
    <property type="taxonomic scope" value="Eukaryota"/>
</dbReference>
<dbReference type="InParanoid" id="P02170"/>
<dbReference type="OrthoDB" id="6344802at2759"/>
<dbReference type="Proteomes" id="UP000001811">
    <property type="component" value="Unplaced"/>
</dbReference>
<dbReference type="GO" id="GO:0070062">
    <property type="term" value="C:extracellular exosome"/>
    <property type="evidence" value="ECO:0007669"/>
    <property type="project" value="TreeGrafter"/>
</dbReference>
<dbReference type="GO" id="GO:0016528">
    <property type="term" value="C:sarcoplasm"/>
    <property type="evidence" value="ECO:0000250"/>
    <property type="project" value="UniProtKB"/>
</dbReference>
<dbReference type="GO" id="GO:0020037">
    <property type="term" value="F:heme binding"/>
    <property type="evidence" value="ECO:0007669"/>
    <property type="project" value="InterPro"/>
</dbReference>
<dbReference type="GO" id="GO:0046872">
    <property type="term" value="F:metal ion binding"/>
    <property type="evidence" value="ECO:0007669"/>
    <property type="project" value="UniProtKB-KW"/>
</dbReference>
<dbReference type="GO" id="GO:0098809">
    <property type="term" value="F:nitrite reductase activity"/>
    <property type="evidence" value="ECO:0000250"/>
    <property type="project" value="UniProtKB"/>
</dbReference>
<dbReference type="GO" id="GO:0019825">
    <property type="term" value="F:oxygen binding"/>
    <property type="evidence" value="ECO:0007669"/>
    <property type="project" value="InterPro"/>
</dbReference>
<dbReference type="GO" id="GO:0005344">
    <property type="term" value="F:oxygen carrier activity"/>
    <property type="evidence" value="ECO:0000250"/>
    <property type="project" value="UniProtKB"/>
</dbReference>
<dbReference type="GO" id="GO:0004601">
    <property type="term" value="F:peroxidase activity"/>
    <property type="evidence" value="ECO:0000250"/>
    <property type="project" value="UniProtKB"/>
</dbReference>
<dbReference type="GO" id="GO:0019430">
    <property type="term" value="P:removal of superoxide radicals"/>
    <property type="evidence" value="ECO:0000250"/>
    <property type="project" value="UniProtKB"/>
</dbReference>
<dbReference type="CDD" id="cd08926">
    <property type="entry name" value="Mb"/>
    <property type="match status" value="1"/>
</dbReference>
<dbReference type="Gene3D" id="6.10.140.2100">
    <property type="match status" value="1"/>
</dbReference>
<dbReference type="Gene3D" id="6.10.140.2110">
    <property type="match status" value="1"/>
</dbReference>
<dbReference type="InterPro" id="IPR000971">
    <property type="entry name" value="Globin"/>
</dbReference>
<dbReference type="InterPro" id="IPR009050">
    <property type="entry name" value="Globin-like_sf"/>
</dbReference>
<dbReference type="InterPro" id="IPR002335">
    <property type="entry name" value="Myoglobin"/>
</dbReference>
<dbReference type="PANTHER" id="PTHR47132">
    <property type="entry name" value="MYOGLOBIN"/>
    <property type="match status" value="1"/>
</dbReference>
<dbReference type="PANTHER" id="PTHR47132:SF1">
    <property type="entry name" value="MYOGLOBIN"/>
    <property type="match status" value="1"/>
</dbReference>
<dbReference type="Pfam" id="PF00042">
    <property type="entry name" value="Globin"/>
    <property type="match status" value="1"/>
</dbReference>
<dbReference type="PRINTS" id="PR00613">
    <property type="entry name" value="MYOGLOBIN"/>
</dbReference>
<dbReference type="SUPFAM" id="SSF46458">
    <property type="entry name" value="Globin-like"/>
    <property type="match status" value="1"/>
</dbReference>
<dbReference type="PROSITE" id="PS01033">
    <property type="entry name" value="GLOBIN"/>
    <property type="match status" value="1"/>
</dbReference>
<feature type="initiator methionine" description="Removed" evidence="8">
    <location>
        <position position="1"/>
    </location>
</feature>
<feature type="chain" id="PRO_0000053340" description="Myoglobin">
    <location>
        <begin position="2"/>
        <end position="154"/>
    </location>
</feature>
<feature type="domain" description="Globin" evidence="7">
    <location>
        <begin position="2"/>
        <end position="148"/>
    </location>
</feature>
<feature type="binding site" evidence="5">
    <location>
        <position position="65"/>
    </location>
    <ligand>
        <name>nitrite</name>
        <dbReference type="ChEBI" id="CHEBI:16301"/>
    </ligand>
</feature>
<feature type="binding site" evidence="3 7">
    <location>
        <position position="65"/>
    </location>
    <ligand>
        <name>O2</name>
        <dbReference type="ChEBI" id="CHEBI:15379"/>
    </ligand>
</feature>
<feature type="binding site" description="proximal binding residue" evidence="1">
    <location>
        <position position="94"/>
    </location>
    <ligand>
        <name>heme b</name>
        <dbReference type="ChEBI" id="CHEBI:60344"/>
    </ligand>
    <ligandPart>
        <name>Fe</name>
        <dbReference type="ChEBI" id="CHEBI:18248"/>
    </ligandPart>
</feature>
<feature type="modified residue" description="Phosphoserine" evidence="6">
    <location>
        <position position="4"/>
    </location>
</feature>
<feature type="modified residue" description="Phosphothreonine" evidence="4">
    <location>
        <position position="68"/>
    </location>
</feature>
<proteinExistence type="evidence at protein level"/>
<evidence type="ECO:0000250" key="1">
    <source>
        <dbReference type="UniProtKB" id="P02144"/>
    </source>
</evidence>
<evidence type="ECO:0000250" key="2">
    <source>
        <dbReference type="UniProtKB" id="P02185"/>
    </source>
</evidence>
<evidence type="ECO:0000250" key="3">
    <source>
        <dbReference type="UniProtKB" id="P02189"/>
    </source>
</evidence>
<evidence type="ECO:0000250" key="4">
    <source>
        <dbReference type="UniProtKB" id="P04247"/>
    </source>
</evidence>
<evidence type="ECO:0000250" key="5">
    <source>
        <dbReference type="UniProtKB" id="P68082"/>
    </source>
</evidence>
<evidence type="ECO:0000250" key="6">
    <source>
        <dbReference type="UniProtKB" id="Q9QZ76"/>
    </source>
</evidence>
<evidence type="ECO:0000255" key="7">
    <source>
        <dbReference type="PROSITE-ProRule" id="PRU00238"/>
    </source>
</evidence>
<evidence type="ECO:0000269" key="8">
    <source>
    </source>
</evidence>
<sequence>MGLSDAEWQLVLNVWGKVEADLAGHGQEVLIRLFHTHPETLEKFDKFKHLKSEDEMKASEDLKKHGNTVLTALGAILKKKGHHEAEIKPLAQSHATKHKIPVKYLEFISEAIIHVLHSKHPGDFGADAQAAMSKALELFRNDIAAQYKELGFQG</sequence>
<comment type="function">
    <text evidence="1">Monomeric heme protein which primary function is to store oxygen and facilitate its diffusion within muscle tissues. Reversibly binds oxygen through a pentacoordinated heme iron and enables its timely and efficient release as needed during periods of heightened demand. Depending on the oxidative conditions of tissues and cells, and in addition to its ability to bind oxygen, it also has a nitrite reductase activity whereby it regulates the production of bioactive nitric oxide. Under stress conditions, like hypoxia and anoxia, it also protects cells against reactive oxygen species thanks to its pseudoperoxidase activity.</text>
</comment>
<comment type="catalytic activity">
    <reaction evidence="1">
        <text>Fe(III)-heme b-[protein] + nitric oxide + H2O = Fe(II)-heme b-[protein] + nitrite + 2 H(+)</text>
        <dbReference type="Rhea" id="RHEA:77711"/>
        <dbReference type="Rhea" id="RHEA-COMP:18975"/>
        <dbReference type="Rhea" id="RHEA-COMP:18976"/>
        <dbReference type="ChEBI" id="CHEBI:15377"/>
        <dbReference type="ChEBI" id="CHEBI:15378"/>
        <dbReference type="ChEBI" id="CHEBI:16301"/>
        <dbReference type="ChEBI" id="CHEBI:16480"/>
        <dbReference type="ChEBI" id="CHEBI:55376"/>
        <dbReference type="ChEBI" id="CHEBI:60344"/>
    </reaction>
    <physiologicalReaction direction="right-to-left" evidence="1">
        <dbReference type="Rhea" id="RHEA:77713"/>
    </physiologicalReaction>
</comment>
<comment type="catalytic activity">
    <reaction evidence="1">
        <text>H2O2 + AH2 = A + 2 H2O</text>
        <dbReference type="Rhea" id="RHEA:30275"/>
        <dbReference type="ChEBI" id="CHEBI:13193"/>
        <dbReference type="ChEBI" id="CHEBI:15377"/>
        <dbReference type="ChEBI" id="CHEBI:16240"/>
        <dbReference type="ChEBI" id="CHEBI:17499"/>
    </reaction>
</comment>
<comment type="subunit">
    <text evidence="2">Monomeric.</text>
</comment>
<comment type="subcellular location">
    <subcellularLocation>
        <location evidence="1">Cytoplasm</location>
        <location evidence="1">Sarcoplasm</location>
    </subcellularLocation>
</comment>
<comment type="similarity">
    <text evidence="7">Belongs to the globin family.</text>
</comment>